<proteinExistence type="inferred from homology"/>
<name>NQOR_BRADU</name>
<comment type="catalytic activity">
    <reaction evidence="1">
        <text>a quinone + NADH + H(+) = a quinol + NAD(+)</text>
        <dbReference type="Rhea" id="RHEA:46160"/>
        <dbReference type="ChEBI" id="CHEBI:15378"/>
        <dbReference type="ChEBI" id="CHEBI:24646"/>
        <dbReference type="ChEBI" id="CHEBI:57540"/>
        <dbReference type="ChEBI" id="CHEBI:57945"/>
        <dbReference type="ChEBI" id="CHEBI:132124"/>
        <dbReference type="EC" id="1.6.5.2"/>
    </reaction>
</comment>
<comment type="catalytic activity">
    <reaction evidence="1">
        <text>a quinone + NADPH + H(+) = a quinol + NADP(+)</text>
        <dbReference type="Rhea" id="RHEA:46164"/>
        <dbReference type="ChEBI" id="CHEBI:15378"/>
        <dbReference type="ChEBI" id="CHEBI:24646"/>
        <dbReference type="ChEBI" id="CHEBI:57783"/>
        <dbReference type="ChEBI" id="CHEBI:58349"/>
        <dbReference type="ChEBI" id="CHEBI:132124"/>
        <dbReference type="EC" id="1.6.5.2"/>
    </reaction>
</comment>
<comment type="cofactor">
    <cofactor evidence="1">
        <name>FMN</name>
        <dbReference type="ChEBI" id="CHEBI:58210"/>
    </cofactor>
    <text evidence="1">Binds 1 FMN per monomer.</text>
</comment>
<comment type="similarity">
    <text evidence="1">Belongs to the WrbA family.</text>
</comment>
<gene>
    <name type="ordered locus">blr7568</name>
</gene>
<protein>
    <recommendedName>
        <fullName evidence="1">NAD(P)H dehydrogenase (quinone)</fullName>
        <ecNumber evidence="1">1.6.5.2</ecNumber>
    </recommendedName>
    <alternativeName>
        <fullName>Flavoprotein WrbA</fullName>
    </alternativeName>
    <alternativeName>
        <fullName evidence="1">NAD(P)H:quinone oxidoreductase</fullName>
        <shortName evidence="1">NQO</shortName>
    </alternativeName>
</protein>
<sequence>MTKVLVLYYSAYGHIEAMANAVAEGAREAGVTVDIKRVPELVPAEVAKASYYKVDQAAPIAKIEDLTNYDAIIVGTGTRFGRMGSQMANFLDQAGGLWAKGALHGKVGGAFTSSATQHGGQETTLFSIITNLLHFGMVVVGMNYGFAGQMKLDEVTGGAPYGATTITGGDGSRQPSANELAGARYQGRQIAETARKLHG</sequence>
<dbReference type="EC" id="1.6.5.2" evidence="1"/>
<dbReference type="EMBL" id="BA000040">
    <property type="protein sequence ID" value="BAC52833.1"/>
    <property type="molecule type" value="Genomic_DNA"/>
</dbReference>
<dbReference type="RefSeq" id="NP_774208.1">
    <property type="nucleotide sequence ID" value="NC_004463.1"/>
</dbReference>
<dbReference type="RefSeq" id="WP_011090297.1">
    <property type="nucleotide sequence ID" value="NC_004463.1"/>
</dbReference>
<dbReference type="SMR" id="Q89D74"/>
<dbReference type="FunCoup" id="Q89D74">
    <property type="interactions" value="446"/>
</dbReference>
<dbReference type="STRING" id="224911.AAV28_35520"/>
<dbReference type="EnsemblBacteria" id="BAC52833">
    <property type="protein sequence ID" value="BAC52833"/>
    <property type="gene ID" value="BAC52833"/>
</dbReference>
<dbReference type="GeneID" id="46494522"/>
<dbReference type="KEGG" id="bja:blr7568"/>
<dbReference type="PATRIC" id="fig|224911.44.peg.7674"/>
<dbReference type="eggNOG" id="COG0655">
    <property type="taxonomic scope" value="Bacteria"/>
</dbReference>
<dbReference type="HOGENOM" id="CLU_051402_0_2_5"/>
<dbReference type="InParanoid" id="Q89D74"/>
<dbReference type="OrthoDB" id="9801479at2"/>
<dbReference type="PhylomeDB" id="Q89D74"/>
<dbReference type="Proteomes" id="UP000002526">
    <property type="component" value="Chromosome"/>
</dbReference>
<dbReference type="GO" id="GO:0016020">
    <property type="term" value="C:membrane"/>
    <property type="evidence" value="ECO:0000318"/>
    <property type="project" value="GO_Central"/>
</dbReference>
<dbReference type="GO" id="GO:0050660">
    <property type="term" value="F:flavin adenine dinucleotide binding"/>
    <property type="evidence" value="ECO:0007669"/>
    <property type="project" value="UniProtKB-UniRule"/>
</dbReference>
<dbReference type="GO" id="GO:0010181">
    <property type="term" value="F:FMN binding"/>
    <property type="evidence" value="ECO:0007669"/>
    <property type="project" value="InterPro"/>
</dbReference>
<dbReference type="GO" id="GO:0051287">
    <property type="term" value="F:NAD binding"/>
    <property type="evidence" value="ECO:0007669"/>
    <property type="project" value="UniProtKB-UniRule"/>
</dbReference>
<dbReference type="GO" id="GO:0003955">
    <property type="term" value="F:NAD(P)H dehydrogenase (quinone) activity"/>
    <property type="evidence" value="ECO:0000318"/>
    <property type="project" value="GO_Central"/>
</dbReference>
<dbReference type="GO" id="GO:0050136">
    <property type="term" value="F:NADH:ubiquinone reductase (non-electrogenic) activity"/>
    <property type="evidence" value="ECO:0007669"/>
    <property type="project" value="RHEA"/>
</dbReference>
<dbReference type="GO" id="GO:0050661">
    <property type="term" value="F:NADP binding"/>
    <property type="evidence" value="ECO:0007669"/>
    <property type="project" value="UniProtKB-UniRule"/>
</dbReference>
<dbReference type="GO" id="GO:0008753">
    <property type="term" value="F:NADPH dehydrogenase (quinone) activity"/>
    <property type="evidence" value="ECO:0007669"/>
    <property type="project" value="RHEA"/>
</dbReference>
<dbReference type="FunFam" id="3.40.50.360:FF:000001">
    <property type="entry name" value="NAD(P)H dehydrogenase (Quinone) FQR1-like"/>
    <property type="match status" value="1"/>
</dbReference>
<dbReference type="Gene3D" id="3.40.50.360">
    <property type="match status" value="1"/>
</dbReference>
<dbReference type="HAMAP" id="MF_01017">
    <property type="entry name" value="NQOR"/>
    <property type="match status" value="1"/>
</dbReference>
<dbReference type="InterPro" id="IPR008254">
    <property type="entry name" value="Flavodoxin/NO_synth"/>
</dbReference>
<dbReference type="InterPro" id="IPR029039">
    <property type="entry name" value="Flavoprotein-like_sf"/>
</dbReference>
<dbReference type="InterPro" id="IPR010089">
    <property type="entry name" value="Flavoprotein_WrbA-like"/>
</dbReference>
<dbReference type="InterPro" id="IPR005025">
    <property type="entry name" value="FMN_Rdtase-like_dom"/>
</dbReference>
<dbReference type="InterPro" id="IPR037513">
    <property type="entry name" value="NQO"/>
</dbReference>
<dbReference type="NCBIfam" id="TIGR01755">
    <property type="entry name" value="flav_wrbA"/>
    <property type="match status" value="1"/>
</dbReference>
<dbReference type="NCBIfam" id="NF002999">
    <property type="entry name" value="PRK03767.1"/>
    <property type="match status" value="1"/>
</dbReference>
<dbReference type="PANTHER" id="PTHR30546">
    <property type="entry name" value="FLAVODOXIN-RELATED PROTEIN WRBA-RELATED"/>
    <property type="match status" value="1"/>
</dbReference>
<dbReference type="PANTHER" id="PTHR30546:SF23">
    <property type="entry name" value="FLAVOPROTEIN-LIKE PROTEIN YCP4-RELATED"/>
    <property type="match status" value="1"/>
</dbReference>
<dbReference type="Pfam" id="PF03358">
    <property type="entry name" value="FMN_red"/>
    <property type="match status" value="1"/>
</dbReference>
<dbReference type="SUPFAM" id="SSF52218">
    <property type="entry name" value="Flavoproteins"/>
    <property type="match status" value="1"/>
</dbReference>
<dbReference type="PROSITE" id="PS50902">
    <property type="entry name" value="FLAVODOXIN_LIKE"/>
    <property type="match status" value="1"/>
</dbReference>
<accession>Q89D74</accession>
<organism>
    <name type="scientific">Bradyrhizobium diazoefficiens (strain JCM 10833 / BCRC 13528 / IAM 13628 / NBRC 14792 / USDA 110)</name>
    <dbReference type="NCBI Taxonomy" id="224911"/>
    <lineage>
        <taxon>Bacteria</taxon>
        <taxon>Pseudomonadati</taxon>
        <taxon>Pseudomonadota</taxon>
        <taxon>Alphaproteobacteria</taxon>
        <taxon>Hyphomicrobiales</taxon>
        <taxon>Nitrobacteraceae</taxon>
        <taxon>Bradyrhizobium</taxon>
    </lineage>
</organism>
<keyword id="KW-0285">Flavoprotein</keyword>
<keyword id="KW-0288">FMN</keyword>
<keyword id="KW-0520">NAD</keyword>
<keyword id="KW-0521">NADP</keyword>
<keyword id="KW-0547">Nucleotide-binding</keyword>
<keyword id="KW-0560">Oxidoreductase</keyword>
<keyword id="KW-1185">Reference proteome</keyword>
<reference key="1">
    <citation type="journal article" date="2002" name="DNA Res.">
        <title>Complete genomic sequence of nitrogen-fixing symbiotic bacterium Bradyrhizobium japonicum USDA110.</title>
        <authorList>
            <person name="Kaneko T."/>
            <person name="Nakamura Y."/>
            <person name="Sato S."/>
            <person name="Minamisawa K."/>
            <person name="Uchiumi T."/>
            <person name="Sasamoto S."/>
            <person name="Watanabe A."/>
            <person name="Idesawa K."/>
            <person name="Iriguchi M."/>
            <person name="Kawashima K."/>
            <person name="Kohara M."/>
            <person name="Matsumoto M."/>
            <person name="Shimpo S."/>
            <person name="Tsuruoka H."/>
            <person name="Wada T."/>
            <person name="Yamada M."/>
            <person name="Tabata S."/>
        </authorList>
    </citation>
    <scope>NUCLEOTIDE SEQUENCE [LARGE SCALE GENOMIC DNA]</scope>
    <source>
        <strain>JCM 10833 / BCRC 13528 / IAM 13628 / NBRC 14792 / USDA 110</strain>
    </source>
</reference>
<feature type="chain" id="PRO_0000200742" description="NAD(P)H dehydrogenase (quinone)">
    <location>
        <begin position="1"/>
        <end position="199"/>
    </location>
</feature>
<feature type="domain" description="Flavodoxin-like" evidence="1">
    <location>
        <begin position="4"/>
        <end position="190"/>
    </location>
</feature>
<feature type="binding site" evidence="1">
    <location>
        <begin position="10"/>
        <end position="15"/>
    </location>
    <ligand>
        <name>FMN</name>
        <dbReference type="ChEBI" id="CHEBI:58210"/>
    </ligand>
</feature>
<feature type="binding site" evidence="1">
    <location>
        <position position="12"/>
    </location>
    <ligand>
        <name>NAD(+)</name>
        <dbReference type="ChEBI" id="CHEBI:57540"/>
    </ligand>
</feature>
<feature type="binding site" evidence="1">
    <location>
        <begin position="78"/>
        <end position="80"/>
    </location>
    <ligand>
        <name>FMN</name>
        <dbReference type="ChEBI" id="CHEBI:58210"/>
    </ligand>
</feature>
<feature type="binding site" evidence="1">
    <location>
        <position position="98"/>
    </location>
    <ligand>
        <name>substrate</name>
    </ligand>
</feature>
<feature type="binding site" evidence="1">
    <location>
        <begin position="113"/>
        <end position="119"/>
    </location>
    <ligand>
        <name>FMN</name>
        <dbReference type="ChEBI" id="CHEBI:58210"/>
    </ligand>
</feature>
<feature type="binding site" evidence="1">
    <location>
        <position position="134"/>
    </location>
    <ligand>
        <name>FMN</name>
        <dbReference type="ChEBI" id="CHEBI:58210"/>
    </ligand>
</feature>
<evidence type="ECO:0000255" key="1">
    <source>
        <dbReference type="HAMAP-Rule" id="MF_01017"/>
    </source>
</evidence>